<feature type="chain" id="PRO_0000269585" description="Hemin import ATP-binding protein HmuV">
    <location>
        <begin position="1"/>
        <end position="273"/>
    </location>
</feature>
<feature type="domain" description="ABC transporter" evidence="1">
    <location>
        <begin position="2"/>
        <end position="256"/>
    </location>
</feature>
<feature type="binding site" evidence="1">
    <location>
        <begin position="34"/>
        <end position="41"/>
    </location>
    <ligand>
        <name>ATP</name>
        <dbReference type="ChEBI" id="CHEBI:30616"/>
    </ligand>
</feature>
<gene>
    <name evidence="1" type="primary">hmuV</name>
    <name type="ordered locus">Bcep18194_B0217</name>
</gene>
<comment type="function">
    <text evidence="1">Part of the ABC transporter complex HmuTUV involved in hemin import. Responsible for energy coupling to the transport system.</text>
</comment>
<comment type="subunit">
    <text evidence="1">The complex is composed of two ATP-binding proteins (HmuV), two transmembrane proteins (HmuU) and a solute-binding protein (HmuT).</text>
</comment>
<comment type="subcellular location">
    <subcellularLocation>
        <location evidence="1">Cell inner membrane</location>
        <topology evidence="1">Peripheral membrane protein</topology>
    </subcellularLocation>
</comment>
<comment type="similarity">
    <text evidence="1">Belongs to the ABC transporter superfamily. Heme (hemin) importer (TC 3.A.1.14.5) family.</text>
</comment>
<dbReference type="EC" id="7.6.2.-" evidence="1"/>
<dbReference type="EMBL" id="CP000152">
    <property type="protein sequence ID" value="ABB10333.1"/>
    <property type="molecule type" value="Genomic_DNA"/>
</dbReference>
<dbReference type="RefSeq" id="WP_011353831.1">
    <property type="nucleotide sequence ID" value="NC_007511.1"/>
</dbReference>
<dbReference type="SMR" id="Q39B28"/>
<dbReference type="GeneID" id="45096603"/>
<dbReference type="KEGG" id="bur:Bcep18194_B0217"/>
<dbReference type="PATRIC" id="fig|482957.22.peg.3792"/>
<dbReference type="HOGENOM" id="CLU_000604_1_11_4"/>
<dbReference type="Proteomes" id="UP000002705">
    <property type="component" value="Chromosome 2"/>
</dbReference>
<dbReference type="GO" id="GO:0005886">
    <property type="term" value="C:plasma membrane"/>
    <property type="evidence" value="ECO:0007669"/>
    <property type="project" value="UniProtKB-SubCell"/>
</dbReference>
<dbReference type="GO" id="GO:0005524">
    <property type="term" value="F:ATP binding"/>
    <property type="evidence" value="ECO:0007669"/>
    <property type="project" value="UniProtKB-KW"/>
</dbReference>
<dbReference type="GO" id="GO:0016887">
    <property type="term" value="F:ATP hydrolysis activity"/>
    <property type="evidence" value="ECO:0007669"/>
    <property type="project" value="InterPro"/>
</dbReference>
<dbReference type="CDD" id="cd03214">
    <property type="entry name" value="ABC_Iron-Siderophores_B12_Hemin"/>
    <property type="match status" value="1"/>
</dbReference>
<dbReference type="Gene3D" id="3.40.50.300">
    <property type="entry name" value="P-loop containing nucleotide triphosphate hydrolases"/>
    <property type="match status" value="1"/>
</dbReference>
<dbReference type="InterPro" id="IPR003593">
    <property type="entry name" value="AAA+_ATPase"/>
</dbReference>
<dbReference type="InterPro" id="IPR003439">
    <property type="entry name" value="ABC_transporter-like_ATP-bd"/>
</dbReference>
<dbReference type="InterPro" id="IPR017871">
    <property type="entry name" value="ABC_transporter-like_CS"/>
</dbReference>
<dbReference type="InterPro" id="IPR027417">
    <property type="entry name" value="P-loop_NTPase"/>
</dbReference>
<dbReference type="NCBIfam" id="NF010067">
    <property type="entry name" value="PRK13547.1"/>
    <property type="match status" value="1"/>
</dbReference>
<dbReference type="NCBIfam" id="NF010068">
    <property type="entry name" value="PRK13548.1"/>
    <property type="match status" value="1"/>
</dbReference>
<dbReference type="PANTHER" id="PTHR42794">
    <property type="entry name" value="HEMIN IMPORT ATP-BINDING PROTEIN HMUV"/>
    <property type="match status" value="1"/>
</dbReference>
<dbReference type="PANTHER" id="PTHR42794:SF1">
    <property type="entry name" value="HEMIN IMPORT ATP-BINDING PROTEIN HMUV"/>
    <property type="match status" value="1"/>
</dbReference>
<dbReference type="Pfam" id="PF00005">
    <property type="entry name" value="ABC_tran"/>
    <property type="match status" value="1"/>
</dbReference>
<dbReference type="SMART" id="SM00382">
    <property type="entry name" value="AAA"/>
    <property type="match status" value="1"/>
</dbReference>
<dbReference type="SUPFAM" id="SSF52540">
    <property type="entry name" value="P-loop containing nucleoside triphosphate hydrolases"/>
    <property type="match status" value="1"/>
</dbReference>
<dbReference type="PROSITE" id="PS00211">
    <property type="entry name" value="ABC_TRANSPORTER_1"/>
    <property type="match status" value="1"/>
</dbReference>
<dbReference type="PROSITE" id="PS50893">
    <property type="entry name" value="ABC_TRANSPORTER_2"/>
    <property type="match status" value="1"/>
</dbReference>
<dbReference type="PROSITE" id="PS51261">
    <property type="entry name" value="HMUV"/>
    <property type="match status" value="1"/>
</dbReference>
<protein>
    <recommendedName>
        <fullName evidence="1">Hemin import ATP-binding protein HmuV</fullName>
        <ecNumber evidence="1">7.6.2.-</ecNumber>
    </recommendedName>
</protein>
<name>HMUV_BURL3</name>
<accession>Q39B28</accession>
<keyword id="KW-0067">ATP-binding</keyword>
<keyword id="KW-0997">Cell inner membrane</keyword>
<keyword id="KW-1003">Cell membrane</keyword>
<keyword id="KW-0472">Membrane</keyword>
<keyword id="KW-0547">Nucleotide-binding</keyword>
<keyword id="KW-1278">Translocase</keyword>
<keyword id="KW-0813">Transport</keyword>
<proteinExistence type="inferred from homology"/>
<sequence length="273" mass="29158">MLTAHHLDVARRHHAILRNLSLSIEPGRVTALLGRNGAGKSTLLKTFAGELTGGVAPNGVRVTGDITLNGEPLARIDAPRLACLRAVLPQAAQPAFPFSVDEIVLLGRYPHARRSGATSHRDRDIAWCALERAGADALVGRDVTTLSGGELARVQFARVLAQLWPDDEAIESGPRYLLLDEPTAALDLSHQHRLLETVRAVAREWQLGVLAIVHDPNLAARHADTIAMLADGTIVAHGSPRDVMTPAHIAQCYGFAVKMVETGDGAPPVMVPA</sequence>
<evidence type="ECO:0000255" key="1">
    <source>
        <dbReference type="HAMAP-Rule" id="MF_01718"/>
    </source>
</evidence>
<organism>
    <name type="scientific">Burkholderia lata (strain ATCC 17760 / DSM 23089 / LMG 22485 / NCIMB 9086 / R18194 / 383)</name>
    <dbReference type="NCBI Taxonomy" id="482957"/>
    <lineage>
        <taxon>Bacteria</taxon>
        <taxon>Pseudomonadati</taxon>
        <taxon>Pseudomonadota</taxon>
        <taxon>Betaproteobacteria</taxon>
        <taxon>Burkholderiales</taxon>
        <taxon>Burkholderiaceae</taxon>
        <taxon>Burkholderia</taxon>
        <taxon>Burkholderia cepacia complex</taxon>
    </lineage>
</organism>
<reference key="1">
    <citation type="submission" date="2005-10" db="EMBL/GenBank/DDBJ databases">
        <title>Complete sequence of chromosome 2 of Burkholderia sp. 383.</title>
        <authorList>
            <consortium name="US DOE Joint Genome Institute"/>
            <person name="Copeland A."/>
            <person name="Lucas S."/>
            <person name="Lapidus A."/>
            <person name="Barry K."/>
            <person name="Detter J.C."/>
            <person name="Glavina T."/>
            <person name="Hammon N."/>
            <person name="Israni S."/>
            <person name="Pitluck S."/>
            <person name="Chain P."/>
            <person name="Malfatti S."/>
            <person name="Shin M."/>
            <person name="Vergez L."/>
            <person name="Schmutz J."/>
            <person name="Larimer F."/>
            <person name="Land M."/>
            <person name="Kyrpides N."/>
            <person name="Lykidis A."/>
            <person name="Richardson P."/>
        </authorList>
    </citation>
    <scope>NUCLEOTIDE SEQUENCE [LARGE SCALE GENOMIC DNA]</scope>
    <source>
        <strain>ATCC 17760 / DSM 23089 / LMG 22485 / NCIMB 9086 / R18194 / 383</strain>
    </source>
</reference>